<sequence>MSRQETTPYTLGEIEQGTPCCVPKALLRVRDLAVSYGEITVLSQVSLDIYKGCITALIGPSGCGKTSFLSTLNRLTDHHERARVNGRILFDGQDLLCDPVDTLRLRRRIGMIFQRPNPFPLSIWRNLELPLKEHGVRDRQTRYRKIEQALKDVGLWDEVSDRLGISALVLSGGQQQRLCIARALVLEPEILLMDEPCSALDPISSGVVEELILRLRGRYTVVIVTHNLAQARRVANYAGFFWMTERVGKLIEFGQCQHLFETPSHELTAAYISGARG</sequence>
<dbReference type="EC" id="7.3.2.1" evidence="1"/>
<dbReference type="EMBL" id="CP000127">
    <property type="protein sequence ID" value="ABA57100.1"/>
    <property type="molecule type" value="Genomic_DNA"/>
</dbReference>
<dbReference type="SMR" id="Q3JDJ6"/>
<dbReference type="STRING" id="323261.Noc_0581"/>
<dbReference type="KEGG" id="noc:Noc_0581"/>
<dbReference type="eggNOG" id="COG1117">
    <property type="taxonomic scope" value="Bacteria"/>
</dbReference>
<dbReference type="HOGENOM" id="CLU_000604_1_22_6"/>
<dbReference type="InParanoid" id="Q3JDJ6"/>
<dbReference type="Proteomes" id="UP000006838">
    <property type="component" value="Chromosome"/>
</dbReference>
<dbReference type="GO" id="GO:0005886">
    <property type="term" value="C:plasma membrane"/>
    <property type="evidence" value="ECO:0007669"/>
    <property type="project" value="UniProtKB-SubCell"/>
</dbReference>
<dbReference type="GO" id="GO:0005524">
    <property type="term" value="F:ATP binding"/>
    <property type="evidence" value="ECO:0007669"/>
    <property type="project" value="UniProtKB-KW"/>
</dbReference>
<dbReference type="GO" id="GO:0016887">
    <property type="term" value="F:ATP hydrolysis activity"/>
    <property type="evidence" value="ECO:0007669"/>
    <property type="project" value="InterPro"/>
</dbReference>
<dbReference type="GO" id="GO:0015415">
    <property type="term" value="F:ATPase-coupled phosphate ion transmembrane transporter activity"/>
    <property type="evidence" value="ECO:0007669"/>
    <property type="project" value="UniProtKB-EC"/>
</dbReference>
<dbReference type="GO" id="GO:0035435">
    <property type="term" value="P:phosphate ion transmembrane transport"/>
    <property type="evidence" value="ECO:0007669"/>
    <property type="project" value="InterPro"/>
</dbReference>
<dbReference type="CDD" id="cd03260">
    <property type="entry name" value="ABC_PstB_phosphate_transporter"/>
    <property type="match status" value="1"/>
</dbReference>
<dbReference type="Gene3D" id="3.40.50.300">
    <property type="entry name" value="P-loop containing nucleotide triphosphate hydrolases"/>
    <property type="match status" value="1"/>
</dbReference>
<dbReference type="InterPro" id="IPR003593">
    <property type="entry name" value="AAA+_ATPase"/>
</dbReference>
<dbReference type="InterPro" id="IPR003439">
    <property type="entry name" value="ABC_transporter-like_ATP-bd"/>
</dbReference>
<dbReference type="InterPro" id="IPR017871">
    <property type="entry name" value="ABC_transporter-like_CS"/>
</dbReference>
<dbReference type="InterPro" id="IPR027417">
    <property type="entry name" value="P-loop_NTPase"/>
</dbReference>
<dbReference type="InterPro" id="IPR005670">
    <property type="entry name" value="PstB-like"/>
</dbReference>
<dbReference type="PANTHER" id="PTHR43423">
    <property type="entry name" value="ABC TRANSPORTER I FAMILY MEMBER 17"/>
    <property type="match status" value="1"/>
</dbReference>
<dbReference type="PANTHER" id="PTHR43423:SF1">
    <property type="entry name" value="ABC TRANSPORTER I FAMILY MEMBER 17"/>
    <property type="match status" value="1"/>
</dbReference>
<dbReference type="Pfam" id="PF00005">
    <property type="entry name" value="ABC_tran"/>
    <property type="match status" value="1"/>
</dbReference>
<dbReference type="SMART" id="SM00382">
    <property type="entry name" value="AAA"/>
    <property type="match status" value="1"/>
</dbReference>
<dbReference type="SUPFAM" id="SSF52540">
    <property type="entry name" value="P-loop containing nucleoside triphosphate hydrolases"/>
    <property type="match status" value="1"/>
</dbReference>
<dbReference type="PROSITE" id="PS00211">
    <property type="entry name" value="ABC_TRANSPORTER_1"/>
    <property type="match status" value="1"/>
</dbReference>
<dbReference type="PROSITE" id="PS50893">
    <property type="entry name" value="ABC_TRANSPORTER_2"/>
    <property type="match status" value="1"/>
</dbReference>
<dbReference type="PROSITE" id="PS51238">
    <property type="entry name" value="PSTB"/>
    <property type="match status" value="1"/>
</dbReference>
<evidence type="ECO:0000255" key="1">
    <source>
        <dbReference type="HAMAP-Rule" id="MF_01702"/>
    </source>
</evidence>
<keyword id="KW-0067">ATP-binding</keyword>
<keyword id="KW-0997">Cell inner membrane</keyword>
<keyword id="KW-1003">Cell membrane</keyword>
<keyword id="KW-0472">Membrane</keyword>
<keyword id="KW-0547">Nucleotide-binding</keyword>
<keyword id="KW-0592">Phosphate transport</keyword>
<keyword id="KW-1185">Reference proteome</keyword>
<keyword id="KW-1278">Translocase</keyword>
<keyword id="KW-0813">Transport</keyword>
<accession>Q3JDJ6</accession>
<gene>
    <name evidence="1" type="primary">pstB1</name>
    <name type="ordered locus">Noc_0581</name>
</gene>
<protein>
    <recommendedName>
        <fullName evidence="1">Phosphate import ATP-binding protein PstB 1</fullName>
        <ecNumber evidence="1">7.3.2.1</ecNumber>
    </recommendedName>
    <alternativeName>
        <fullName evidence="1">ABC phosphate transporter 1</fullName>
    </alternativeName>
    <alternativeName>
        <fullName evidence="1">Phosphate-transporting ATPase 1</fullName>
    </alternativeName>
</protein>
<name>PSTB1_NITOC</name>
<reference key="1">
    <citation type="journal article" date="2006" name="Appl. Environ. Microbiol.">
        <title>Complete genome sequence of the marine, chemolithoautotrophic, ammonia-oxidizing bacterium Nitrosococcus oceani ATCC 19707.</title>
        <authorList>
            <person name="Klotz M.G."/>
            <person name="Arp D.J."/>
            <person name="Chain P.S.G."/>
            <person name="El-Sheikh A.F."/>
            <person name="Hauser L.J."/>
            <person name="Hommes N.G."/>
            <person name="Larimer F.W."/>
            <person name="Malfatti S.A."/>
            <person name="Norton J.M."/>
            <person name="Poret-Peterson A.T."/>
            <person name="Vergez L.M."/>
            <person name="Ward B.B."/>
        </authorList>
    </citation>
    <scope>NUCLEOTIDE SEQUENCE [LARGE SCALE GENOMIC DNA]</scope>
    <source>
        <strain>ATCC 19707 / BCRC 17464 / JCM 30415 / NCIMB 11848 / C-107</strain>
    </source>
</reference>
<comment type="function">
    <text evidence="1">Part of the ABC transporter complex PstSACB involved in phosphate import. Responsible for energy coupling to the transport system.</text>
</comment>
<comment type="catalytic activity">
    <reaction evidence="1">
        <text>phosphate(out) + ATP + H2O = ADP + 2 phosphate(in) + H(+)</text>
        <dbReference type="Rhea" id="RHEA:24440"/>
        <dbReference type="ChEBI" id="CHEBI:15377"/>
        <dbReference type="ChEBI" id="CHEBI:15378"/>
        <dbReference type="ChEBI" id="CHEBI:30616"/>
        <dbReference type="ChEBI" id="CHEBI:43474"/>
        <dbReference type="ChEBI" id="CHEBI:456216"/>
        <dbReference type="EC" id="7.3.2.1"/>
    </reaction>
</comment>
<comment type="subunit">
    <text evidence="1">The complex is composed of two ATP-binding proteins (PstB), two transmembrane proteins (PstC and PstA) and a solute-binding protein (PstS).</text>
</comment>
<comment type="subcellular location">
    <subcellularLocation>
        <location evidence="1">Cell inner membrane</location>
        <topology evidence="1">Peripheral membrane protein</topology>
    </subcellularLocation>
</comment>
<comment type="similarity">
    <text evidence="1">Belongs to the ABC transporter superfamily. Phosphate importer (TC 3.A.1.7) family.</text>
</comment>
<feature type="chain" id="PRO_0000272484" description="Phosphate import ATP-binding protein PstB 1">
    <location>
        <begin position="1"/>
        <end position="277"/>
    </location>
</feature>
<feature type="domain" description="ABC transporter" evidence="1">
    <location>
        <begin position="27"/>
        <end position="272"/>
    </location>
</feature>
<feature type="binding site" evidence="1">
    <location>
        <begin position="59"/>
        <end position="66"/>
    </location>
    <ligand>
        <name>ATP</name>
        <dbReference type="ChEBI" id="CHEBI:30616"/>
    </ligand>
</feature>
<proteinExistence type="inferred from homology"/>
<organism>
    <name type="scientific">Nitrosococcus oceani (strain ATCC 19707 / BCRC 17464 / JCM 30415 / NCIMB 11848 / C-107)</name>
    <dbReference type="NCBI Taxonomy" id="323261"/>
    <lineage>
        <taxon>Bacteria</taxon>
        <taxon>Pseudomonadati</taxon>
        <taxon>Pseudomonadota</taxon>
        <taxon>Gammaproteobacteria</taxon>
        <taxon>Chromatiales</taxon>
        <taxon>Chromatiaceae</taxon>
        <taxon>Nitrosococcus</taxon>
    </lineage>
</organism>